<feature type="chain" id="PRO_0000317840" description="Probable cysteine protease atg4">
    <location>
        <begin position="1"/>
        <end position="401"/>
    </location>
</feature>
<feature type="region of interest" description="Disordered" evidence="3">
    <location>
        <begin position="37"/>
        <end position="65"/>
    </location>
</feature>
<feature type="compositionally biased region" description="Polar residues" evidence="3">
    <location>
        <begin position="45"/>
        <end position="65"/>
    </location>
</feature>
<feature type="active site" description="Nucleophile" evidence="1">
    <location>
        <position position="126"/>
    </location>
</feature>
<feature type="active site" evidence="2">
    <location>
        <position position="300"/>
    </location>
</feature>
<feature type="active site" evidence="2">
    <location>
        <position position="302"/>
    </location>
</feature>
<gene>
    <name type="primary">atg4</name>
    <name type="ORF">Pc20g08610</name>
</gene>
<protein>
    <recommendedName>
        <fullName>Probable cysteine protease atg4</fullName>
        <ecNumber>3.4.22.-</ecNumber>
    </recommendedName>
    <alternativeName>
        <fullName>Autophagy-related protein 4</fullName>
    </alternativeName>
</protein>
<keyword id="KW-0072">Autophagy</keyword>
<keyword id="KW-0963">Cytoplasm</keyword>
<keyword id="KW-0378">Hydrolase</keyword>
<keyword id="KW-0539">Nucleus</keyword>
<keyword id="KW-0645">Protease</keyword>
<keyword id="KW-0653">Protein transport</keyword>
<keyword id="KW-1185">Reference proteome</keyword>
<keyword id="KW-0788">Thiol protease</keyword>
<keyword id="KW-0813">Transport</keyword>
<sequence length="401" mass="45302">MTMDMEKCKRIVQYFWDPEPRNDVPAASIWCLGREYAPSQPPSDPASNNPRSPSRQPNASTLNDTTWPKAFLSDFGSRIWITYRSNFTPIPRTKTPEATSSMTLGVRLRSQLMDPQGFTSDTGWGCMIRSGQSLLANTFSVLLLGRDWRRGEKVEEESKLISMFADHPEAPFSIHRFVNRGAESCGKYPGEWFGPSATAKCIQLLSTQSEVPQLRVYLTNDTSDVYEDKFAHVAHDESGRIQPTLILIGTRLGIDNVTPAYWDGLRAALTYPQSVGIAGGRPSASHYFVGAQDCHLFFLDPHTTRPATLYRPDGLYTQEELDSYYTSRLRRIHIKDMDPSMLIGFLVKDEDDWADWKKRIRSTPGQPIVHIFPSQHQPDHGHGRAEALDEVEALDDSDEME</sequence>
<comment type="function">
    <text evidence="1 4">Cysteine protease that plays a key role in cytoplasm to vacuole transport (Cvt) and autophagy by mediating both proteolytic activation and delipidation of ATG8 (PubMed:17204848). Required for selective autophagic degradation of the nucleus (nucleophagy) as well as for mitophagy which contributes to regulate mitochondrial quantity and quality by eliminating the mitochondria to a basal level to fulfill cellular energy requirements and preventing excess ROS production. The protease activity is required for proteolytic activation of ATG8: cleaves the C-terminal amino acid of ATG8 to reveal a C-terminal glycine. ATG8 ubiquitin-like activity requires the exposure of the glycine at the C-terminus for its conjugation to phosphatidylethanolamine (PE) and its insertion to membranes, which is necessary for autophagy. The ATG8-PE conjugate mediates tethering between adjacent membranes and stimulates membrane hemifusion, leading to expansion of the autophagosomal membrane during autophagy. In addition to the protease activity, also catalyzes deconjugation of PE-conjugated forms of ATG8 during macroautophagy: ATG8 delipidation is required to release the protein from membranes, which facilitates multiple events during macroautophagy, and especially for efficient autophagosome biogenesis, the assembly of ATG9-containing tubulovesicular clusters into phagophores/autophagosomes, and for the disassembly of PAS-associated ATG components. ATG8 delipidation by ATG4 also recycles ATG8-PE generated on inappropriate membranes to maintain a reservoir of unlipidated ATG8 that is required for autophagosome formation at the PAS (By similarity).</text>
</comment>
<comment type="catalytic activity">
    <reaction evidence="1">
        <text>[protein]-C-terminal L-amino acid-glycyl-phosphatidylethanolamide + H2O = [protein]-C-terminal L-amino acid-glycine + a 1,2-diacyl-sn-glycero-3-phosphoethanolamine</text>
        <dbReference type="Rhea" id="RHEA:67548"/>
        <dbReference type="Rhea" id="RHEA-COMP:17323"/>
        <dbReference type="Rhea" id="RHEA-COMP:17324"/>
        <dbReference type="ChEBI" id="CHEBI:15377"/>
        <dbReference type="ChEBI" id="CHEBI:64612"/>
        <dbReference type="ChEBI" id="CHEBI:172940"/>
        <dbReference type="ChEBI" id="CHEBI:172941"/>
    </reaction>
    <physiologicalReaction direction="left-to-right" evidence="1">
        <dbReference type="Rhea" id="RHEA:67549"/>
    </physiologicalReaction>
</comment>
<comment type="subcellular location">
    <subcellularLocation>
        <location evidence="1">Cytoplasm</location>
    </subcellularLocation>
    <subcellularLocation>
        <location evidence="1">Nucleus</location>
    </subcellularLocation>
    <subcellularLocation>
        <location evidence="1">Preautophagosomal structure</location>
    </subcellularLocation>
</comment>
<comment type="similarity">
    <text evidence="5">Belongs to the peptidase C54 family.</text>
</comment>
<reference key="1">
    <citation type="journal article" date="2007" name="Autophagy">
        <title>ATG genes involved in non-selective autophagy are conserved from yeast to man, but the selective Cvt and pexophagy pathways also require organism-specific genes.</title>
        <authorList>
            <person name="Meijer W.H."/>
            <person name="van der Klei I.J."/>
            <person name="Veenhuis M."/>
            <person name="Kiel J.A.K.W."/>
        </authorList>
    </citation>
    <scope>NUCLEOTIDE SEQUENCE [GENOMIC DNA]</scope>
    <scope>FUNCTION</scope>
</reference>
<reference key="2">
    <citation type="journal article" date="2008" name="Nat. Biotechnol.">
        <title>Genome sequencing and analysis of the filamentous fungus Penicillium chrysogenum.</title>
        <authorList>
            <person name="van den Berg M.A."/>
            <person name="Albang R."/>
            <person name="Albermann K."/>
            <person name="Badger J.H."/>
            <person name="Daran J.-M."/>
            <person name="Driessen A.J.M."/>
            <person name="Garcia-Estrada C."/>
            <person name="Fedorova N.D."/>
            <person name="Harris D.M."/>
            <person name="Heijne W.H.M."/>
            <person name="Joardar V.S."/>
            <person name="Kiel J.A.K.W."/>
            <person name="Kovalchuk A."/>
            <person name="Martin J.F."/>
            <person name="Nierman W.C."/>
            <person name="Nijland J.G."/>
            <person name="Pronk J.T."/>
            <person name="Roubos J.A."/>
            <person name="van der Klei I.J."/>
            <person name="van Peij N.N.M.E."/>
            <person name="Veenhuis M."/>
            <person name="von Doehren H."/>
            <person name="Wagner C."/>
            <person name="Wortman J.R."/>
            <person name="Bovenberg R.A.L."/>
        </authorList>
    </citation>
    <scope>NUCLEOTIDE SEQUENCE [LARGE SCALE GENOMIC DNA]</scope>
    <source>
        <strain>ATCC 28089 / DSM 1075 / NRRL 1951 / Wisconsin 54-1255</strain>
    </source>
</reference>
<organism>
    <name type="scientific">Penicillium rubens (strain ATCC 28089 / DSM 1075 / NRRL 1951 / Wisconsin 54-1255)</name>
    <name type="common">Penicillium chrysogenum</name>
    <dbReference type="NCBI Taxonomy" id="500485"/>
    <lineage>
        <taxon>Eukaryota</taxon>
        <taxon>Fungi</taxon>
        <taxon>Dikarya</taxon>
        <taxon>Ascomycota</taxon>
        <taxon>Pezizomycotina</taxon>
        <taxon>Eurotiomycetes</taxon>
        <taxon>Eurotiomycetidae</taxon>
        <taxon>Eurotiales</taxon>
        <taxon>Aspergillaceae</taxon>
        <taxon>Penicillium</taxon>
        <taxon>Penicillium chrysogenum species complex</taxon>
    </lineage>
</organism>
<dbReference type="EC" id="3.4.22.-"/>
<dbReference type="EMBL" id="EF107737">
    <property type="protein sequence ID" value="ABO31075.1"/>
    <property type="molecule type" value="Genomic_DNA"/>
</dbReference>
<dbReference type="EMBL" id="AM920435">
    <property type="protein sequence ID" value="CAP86190.1"/>
    <property type="molecule type" value="Genomic_DNA"/>
</dbReference>
<dbReference type="RefSeq" id="XP_002563384.1">
    <property type="nucleotide sequence ID" value="XM_002563338.1"/>
</dbReference>
<dbReference type="SMR" id="A7KAL5"/>
<dbReference type="STRING" id="500485.A7KAL5"/>
<dbReference type="MEROPS" id="C54.001"/>
<dbReference type="VEuPathDB" id="FungiDB:PCH_Pc20g08610"/>
<dbReference type="eggNOG" id="KOG2674">
    <property type="taxonomic scope" value="Eukaryota"/>
</dbReference>
<dbReference type="HOGENOM" id="CLU_021259_5_1_1"/>
<dbReference type="OMA" id="TGFGCMI"/>
<dbReference type="OrthoDB" id="2960936at2759"/>
<dbReference type="BioCyc" id="PCHR:PC20G08610-MONOMER"/>
<dbReference type="Proteomes" id="UP000000724">
    <property type="component" value="Contig Pc00c20"/>
</dbReference>
<dbReference type="GO" id="GO:0005634">
    <property type="term" value="C:nucleus"/>
    <property type="evidence" value="ECO:0007669"/>
    <property type="project" value="UniProtKB-SubCell"/>
</dbReference>
<dbReference type="GO" id="GO:0000407">
    <property type="term" value="C:phagophore assembly site"/>
    <property type="evidence" value="ECO:0007669"/>
    <property type="project" value="UniProtKB-SubCell"/>
</dbReference>
<dbReference type="GO" id="GO:0004197">
    <property type="term" value="F:cysteine-type endopeptidase activity"/>
    <property type="evidence" value="ECO:0007669"/>
    <property type="project" value="TreeGrafter"/>
</dbReference>
<dbReference type="GO" id="GO:0019786">
    <property type="term" value="F:protein-phosphatidylethanolamide deconjugating activity"/>
    <property type="evidence" value="ECO:0007669"/>
    <property type="project" value="InterPro"/>
</dbReference>
<dbReference type="GO" id="GO:0035973">
    <property type="term" value="P:aggrephagy"/>
    <property type="evidence" value="ECO:0007669"/>
    <property type="project" value="TreeGrafter"/>
</dbReference>
<dbReference type="GO" id="GO:0000045">
    <property type="term" value="P:autophagosome assembly"/>
    <property type="evidence" value="ECO:0007669"/>
    <property type="project" value="TreeGrafter"/>
</dbReference>
<dbReference type="GO" id="GO:0000423">
    <property type="term" value="P:mitophagy"/>
    <property type="evidence" value="ECO:0007669"/>
    <property type="project" value="TreeGrafter"/>
</dbReference>
<dbReference type="GO" id="GO:0034727">
    <property type="term" value="P:piecemeal microautophagy of the nucleus"/>
    <property type="evidence" value="ECO:0007669"/>
    <property type="project" value="TreeGrafter"/>
</dbReference>
<dbReference type="GO" id="GO:0016485">
    <property type="term" value="P:protein processing"/>
    <property type="evidence" value="ECO:0007669"/>
    <property type="project" value="TreeGrafter"/>
</dbReference>
<dbReference type="GO" id="GO:0015031">
    <property type="term" value="P:protein transport"/>
    <property type="evidence" value="ECO:0007669"/>
    <property type="project" value="UniProtKB-KW"/>
</dbReference>
<dbReference type="InterPro" id="IPR038765">
    <property type="entry name" value="Papain-like_cys_pep_sf"/>
</dbReference>
<dbReference type="InterPro" id="IPR005078">
    <property type="entry name" value="Peptidase_C54"/>
</dbReference>
<dbReference type="InterPro" id="IPR046792">
    <property type="entry name" value="Peptidase_C54_cat"/>
</dbReference>
<dbReference type="PANTHER" id="PTHR22624:SF49">
    <property type="entry name" value="CYSTEINE PROTEASE"/>
    <property type="match status" value="1"/>
</dbReference>
<dbReference type="PANTHER" id="PTHR22624">
    <property type="entry name" value="CYSTEINE PROTEASE ATG4"/>
    <property type="match status" value="1"/>
</dbReference>
<dbReference type="Pfam" id="PF03416">
    <property type="entry name" value="Peptidase_C54"/>
    <property type="match status" value="1"/>
</dbReference>
<dbReference type="SUPFAM" id="SSF54001">
    <property type="entry name" value="Cysteine proteinases"/>
    <property type="match status" value="1"/>
</dbReference>
<name>ATG4_PENRW</name>
<evidence type="ECO:0000250" key="1">
    <source>
        <dbReference type="UniProtKB" id="P53867"/>
    </source>
</evidence>
<evidence type="ECO:0000250" key="2">
    <source>
        <dbReference type="UniProtKB" id="Q9Y4P1"/>
    </source>
</evidence>
<evidence type="ECO:0000256" key="3">
    <source>
        <dbReference type="SAM" id="MobiDB-lite"/>
    </source>
</evidence>
<evidence type="ECO:0000269" key="4">
    <source>
    </source>
</evidence>
<evidence type="ECO:0000305" key="5"/>
<accession>A7KAL5</accession>
<accession>B6HEZ1</accession>
<proteinExistence type="inferred from homology"/>